<reference key="1">
    <citation type="submission" date="2006-10" db="EMBL/GenBank/DDBJ databases">
        <authorList>
            <person name="Fleischmann R.D."/>
            <person name="Dodson R.J."/>
            <person name="Haft D.H."/>
            <person name="Merkel J.S."/>
            <person name="Nelson W.C."/>
            <person name="Fraser C.M."/>
        </authorList>
    </citation>
    <scope>NUCLEOTIDE SEQUENCE [LARGE SCALE GENOMIC DNA]</scope>
    <source>
        <strain>ATCC 700084 / mc(2)155</strain>
    </source>
</reference>
<reference key="2">
    <citation type="journal article" date="2007" name="Genome Biol.">
        <title>Interrupted coding sequences in Mycobacterium smegmatis: authentic mutations or sequencing errors?</title>
        <authorList>
            <person name="Deshayes C."/>
            <person name="Perrodou E."/>
            <person name="Gallien S."/>
            <person name="Euphrasie D."/>
            <person name="Schaeffer C."/>
            <person name="Van-Dorsselaer A."/>
            <person name="Poch O."/>
            <person name="Lecompte O."/>
            <person name="Reyrat J.-M."/>
        </authorList>
    </citation>
    <scope>NUCLEOTIDE SEQUENCE [LARGE SCALE GENOMIC DNA]</scope>
    <source>
        <strain>ATCC 700084 / mc(2)155</strain>
    </source>
</reference>
<reference key="3">
    <citation type="journal article" date="2009" name="Genome Res.">
        <title>Ortho-proteogenomics: multiple proteomes investigation through orthology and a new MS-based protocol.</title>
        <authorList>
            <person name="Gallien S."/>
            <person name="Perrodou E."/>
            <person name="Carapito C."/>
            <person name="Deshayes C."/>
            <person name="Reyrat J.-M."/>
            <person name="Van Dorsselaer A."/>
            <person name="Poch O."/>
            <person name="Schaeffer C."/>
            <person name="Lecompte O."/>
        </authorList>
    </citation>
    <scope>NUCLEOTIDE SEQUENCE [LARGE SCALE GENOMIC DNA]</scope>
    <source>
        <strain>ATCC 700084 / mc(2)155</strain>
    </source>
</reference>
<reference key="4">
    <citation type="journal article" date="2009" name="Mol. Microbiol.">
        <title>Novel role of Wag31 in protection of mycobacteria under oxidative stress.</title>
        <authorList>
            <person name="Mukherjee P."/>
            <person name="Sureka K."/>
            <person name="Datta P."/>
            <person name="Hossain T."/>
            <person name="Barik S."/>
            <person name="Das K.P."/>
            <person name="Kundu M."/>
            <person name="Basu J."/>
        </authorList>
    </citation>
    <scope>DISRUPTION PHENOTYPE</scope>
    <source>
        <strain>ATCC 700084 / mc(2)155</strain>
    </source>
</reference>
<reference key="5">
    <citation type="journal article" date="2010" name="Mol. Microbiol.">
        <title>M. tuberculosis intramembrane protease Rip1 controls transcription through three anti-sigma factor substrates.</title>
        <authorList>
            <person name="Sklar J.G."/>
            <person name="Makinoshima H."/>
            <person name="Schneider J.S."/>
            <person name="Glickman M.S."/>
        </authorList>
    </citation>
    <scope>DISRUPTION PHENOTYPE</scope>
    <source>
        <strain>ATCC 700084 / mc(2)155</strain>
    </source>
</reference>
<feature type="chain" id="PRO_0000422677" description="Putative zinc metalloprotease Rip2">
    <location>
        <begin position="1"/>
        <end position="259"/>
    </location>
</feature>
<feature type="transmembrane region" description="Helical" evidence="2">
    <location>
        <begin position="14"/>
        <end position="34"/>
    </location>
</feature>
<feature type="transmembrane region" description="Helical" evidence="2">
    <location>
        <begin position="39"/>
        <end position="59"/>
    </location>
</feature>
<feature type="transmembrane region" description="Helical" evidence="2">
    <location>
        <begin position="96"/>
        <end position="116"/>
    </location>
</feature>
<feature type="transmembrane region" description="Helical" evidence="2">
    <location>
        <begin position="129"/>
        <end position="149"/>
    </location>
</feature>
<feature type="transmembrane region" description="Helical" evidence="2">
    <location>
        <begin position="159"/>
        <end position="179"/>
    </location>
</feature>
<feature type="transmembrane region" description="Helical" evidence="2">
    <location>
        <begin position="203"/>
        <end position="223"/>
    </location>
</feature>
<feature type="active site" evidence="1">
    <location>
        <position position="61"/>
    </location>
</feature>
<feature type="binding site" evidence="1">
    <location>
        <position position="60"/>
    </location>
    <ligand>
        <name>Zn(2+)</name>
        <dbReference type="ChEBI" id="CHEBI:29105"/>
        <note>catalytic</note>
    </ligand>
</feature>
<feature type="binding site" evidence="1">
    <location>
        <position position="64"/>
    </location>
    <ligand>
        <name>Zn(2+)</name>
        <dbReference type="ChEBI" id="CHEBI:29105"/>
        <note>catalytic</note>
    </ligand>
</feature>
<sequence length="259" mass="28371">MNIRPLRQSVRPSPIFLLVIAVTAAGGALAWIAADTIRPLSYVGVFILVIAGWLMSLCLHEFGHAFTAWRFGDHGVETRGYLTLNPLKYTHPMLSLGLPVLIIALGGIGFPGGAVYLQTHWMTARQKSIVSLAGPAANLVLAVLLLGLTRAFWDPAHAVFWSGIAFLGFLQVTALVLNLLPIPGLDGYGALEPHLNPETQRALAPAKQWGFLIVVVLLITPALNRWFFELVYWFFDFSGVSSYLVSAGGQLTRFWSAWF</sequence>
<organism>
    <name type="scientific">Mycolicibacterium smegmatis (strain ATCC 700084 / mc(2)155)</name>
    <name type="common">Mycobacterium smegmatis</name>
    <dbReference type="NCBI Taxonomy" id="246196"/>
    <lineage>
        <taxon>Bacteria</taxon>
        <taxon>Bacillati</taxon>
        <taxon>Actinomycetota</taxon>
        <taxon>Actinomycetes</taxon>
        <taxon>Mycobacteriales</taxon>
        <taxon>Mycobacteriaceae</taxon>
        <taxon>Mycolicibacterium</taxon>
    </lineage>
</organism>
<evidence type="ECO:0000250" key="1"/>
<evidence type="ECO:0000255" key="2"/>
<evidence type="ECO:0000269" key="3">
    <source>
    </source>
</evidence>
<evidence type="ECO:0000269" key="4">
    <source>
    </source>
</evidence>
<evidence type="ECO:0000305" key="5"/>
<comment type="cofactor">
    <cofactor evidence="1">
        <name>Zn(2+)</name>
        <dbReference type="ChEBI" id="CHEBI:29105"/>
    </cofactor>
    <text evidence="1">Binds 1 zinc ion per subunit.</text>
</comment>
<comment type="subcellular location">
    <subcellularLocation>
        <location evidence="5">Cell membrane</location>
        <topology evidence="5">Multi-pass membrane protein</topology>
    </subcellularLocation>
</comment>
<comment type="disruption phenotype">
    <text evidence="3 4">Not essential. No effect on degradation of PbpB (PBP3, FtsI) upon depletion experiments (PubMed:19496931). No effect on processing of anti-sigma factors RskA, RslA and RsmA (PubMed:20545848).</text>
</comment>
<comment type="similarity">
    <text evidence="5">Belongs to the peptidase M50B family.</text>
</comment>
<keyword id="KW-1003">Cell membrane</keyword>
<keyword id="KW-0378">Hydrolase</keyword>
<keyword id="KW-0472">Membrane</keyword>
<keyword id="KW-0479">Metal-binding</keyword>
<keyword id="KW-0482">Metalloprotease</keyword>
<keyword id="KW-0645">Protease</keyword>
<keyword id="KW-1185">Reference proteome</keyword>
<keyword id="KW-0812">Transmembrane</keyword>
<keyword id="KW-1133">Transmembrane helix</keyword>
<keyword id="KW-0843">Virulence</keyword>
<keyword id="KW-0862">Zinc</keyword>
<dbReference type="EC" id="3.4.24.-"/>
<dbReference type="EMBL" id="CP000480">
    <property type="protein sequence ID" value="ABK74514.1"/>
    <property type="molecule type" value="Genomic_DNA"/>
</dbReference>
<dbReference type="EMBL" id="CP001663">
    <property type="protein sequence ID" value="AFP37221.1"/>
    <property type="molecule type" value="Genomic_DNA"/>
</dbReference>
<dbReference type="RefSeq" id="WP_011727171.1">
    <property type="nucleotide sequence ID" value="NZ_SIJM01000036.1"/>
</dbReference>
<dbReference type="RefSeq" id="YP_885163.1">
    <property type="nucleotide sequence ID" value="NC_008596.1"/>
</dbReference>
<dbReference type="STRING" id="246196.MSMEG_0756"/>
<dbReference type="PaxDb" id="246196-MSMEI_0741"/>
<dbReference type="KEGG" id="msb:LJ00_03760"/>
<dbReference type="KEGG" id="msg:MSMEI_0741"/>
<dbReference type="KEGG" id="msm:MSMEG_0756"/>
<dbReference type="PATRIC" id="fig|246196.19.peg.753"/>
<dbReference type="eggNOG" id="COG1994">
    <property type="taxonomic scope" value="Bacteria"/>
</dbReference>
<dbReference type="OrthoDB" id="9800627at2"/>
<dbReference type="Proteomes" id="UP000000757">
    <property type="component" value="Chromosome"/>
</dbReference>
<dbReference type="Proteomes" id="UP000006158">
    <property type="component" value="Chromosome"/>
</dbReference>
<dbReference type="GO" id="GO:0005886">
    <property type="term" value="C:plasma membrane"/>
    <property type="evidence" value="ECO:0007669"/>
    <property type="project" value="UniProtKB-SubCell"/>
</dbReference>
<dbReference type="GO" id="GO:0046872">
    <property type="term" value="F:metal ion binding"/>
    <property type="evidence" value="ECO:0007669"/>
    <property type="project" value="UniProtKB-KW"/>
</dbReference>
<dbReference type="GO" id="GO:0008237">
    <property type="term" value="F:metallopeptidase activity"/>
    <property type="evidence" value="ECO:0007669"/>
    <property type="project" value="UniProtKB-KW"/>
</dbReference>
<dbReference type="GO" id="GO:0006508">
    <property type="term" value="P:proteolysis"/>
    <property type="evidence" value="ECO:0007669"/>
    <property type="project" value="UniProtKB-KW"/>
</dbReference>
<dbReference type="CDD" id="cd06158">
    <property type="entry name" value="S2P-M50_like_1"/>
    <property type="match status" value="1"/>
</dbReference>
<dbReference type="InterPro" id="IPR052348">
    <property type="entry name" value="Metallopeptidase_M50B"/>
</dbReference>
<dbReference type="InterPro" id="IPR044537">
    <property type="entry name" value="S2P-M50-like"/>
</dbReference>
<dbReference type="PANTHER" id="PTHR35864">
    <property type="entry name" value="ZINC METALLOPROTEASE MJ0611-RELATED"/>
    <property type="match status" value="1"/>
</dbReference>
<dbReference type="PANTHER" id="PTHR35864:SF1">
    <property type="entry name" value="ZINC METALLOPROTEASE YWHC-RELATED"/>
    <property type="match status" value="1"/>
</dbReference>
<gene>
    <name type="primary">rip2</name>
    <name type="ordered locus">MSMEG_0756</name>
    <name type="ordered locus">MSMEI_0741</name>
</gene>
<accession>A0QQH5</accession>
<proteinExistence type="inferred from homology"/>
<protein>
    <recommendedName>
        <fullName>Putative zinc metalloprotease Rip2</fullName>
        <ecNumber>3.4.24.-</ecNumber>
    </recommendedName>
</protein>
<name>RIP2_MYCS2</name>